<gene>
    <name type="primary">CRYAA</name>
</gene>
<feature type="chain" id="PRO_0000125898" description="Alpha-crystallin A chain">
    <location>
        <begin position="1" status="less than"/>
        <end position="149" status="greater than"/>
    </location>
</feature>
<feature type="domain" description="sHSP" evidence="3">
    <location>
        <begin position="41"/>
        <end position="149"/>
    </location>
</feature>
<feature type="binding site" evidence="1">
    <location>
        <position position="89"/>
    </location>
    <ligand>
        <name>Zn(2+)</name>
        <dbReference type="ChEBI" id="CHEBI:29105"/>
        <label>1</label>
    </ligand>
</feature>
<feature type="binding site" evidence="1">
    <location>
        <position position="91"/>
    </location>
    <ligand>
        <name>Zn(2+)</name>
        <dbReference type="ChEBI" id="CHEBI:29105"/>
        <label>1</label>
    </ligand>
</feature>
<feature type="binding site" evidence="1">
    <location>
        <position position="96"/>
    </location>
    <ligand>
        <name>Zn(2+)</name>
        <dbReference type="ChEBI" id="CHEBI:29105"/>
        <label>2</label>
    </ligand>
</feature>
<feature type="non-terminal residue">
    <location>
        <position position="1"/>
    </location>
</feature>
<feature type="non-terminal residue">
    <location>
        <position position="149"/>
    </location>
</feature>
<evidence type="ECO:0000250" key="1">
    <source>
        <dbReference type="UniProtKB" id="P02470"/>
    </source>
</evidence>
<evidence type="ECO:0000250" key="2">
    <source>
        <dbReference type="UniProtKB" id="P02489"/>
    </source>
</evidence>
<evidence type="ECO:0000255" key="3">
    <source>
        <dbReference type="PROSITE-ProRule" id="PRU00285"/>
    </source>
</evidence>
<proteinExistence type="evidence at transcript level"/>
<accession>Q91517</accession>
<keyword id="KW-0963">Cytoplasm</keyword>
<keyword id="KW-0273">Eye lens protein</keyword>
<keyword id="KW-0479">Metal-binding</keyword>
<keyword id="KW-0539">Nucleus</keyword>
<keyword id="KW-0862">Zinc</keyword>
<name>CRYAA_TRASE</name>
<organism>
    <name type="scientific">Trachemys scripta elegans</name>
    <name type="common">Red-eared slider turtle</name>
    <name type="synonym">Emys elegans</name>
    <dbReference type="NCBI Taxonomy" id="31138"/>
    <lineage>
        <taxon>Eukaryota</taxon>
        <taxon>Metazoa</taxon>
        <taxon>Chordata</taxon>
        <taxon>Craniata</taxon>
        <taxon>Vertebrata</taxon>
        <taxon>Euteleostomi</taxon>
        <taxon>Archelosauria</taxon>
        <taxon>Testudinata</taxon>
        <taxon>Testudines</taxon>
        <taxon>Cryptodira</taxon>
        <taxon>Durocryptodira</taxon>
        <taxon>Testudinoidea</taxon>
        <taxon>Emydidae</taxon>
        <taxon>Trachemys</taxon>
    </lineage>
</organism>
<reference key="1">
    <citation type="journal article" date="1996" name="J. Mol. Evol.">
        <title>Protein sequences indicate that turtles branched off from the amniote tree after mammals.</title>
        <authorList>
            <person name="Caspers G.J."/>
            <person name="Reinders G.J."/>
            <person name="Leunissen J.A.M."/>
            <person name="Wattel J."/>
            <person name="de Jong W.W."/>
        </authorList>
    </citation>
    <scope>NUCLEOTIDE SEQUENCE [MRNA]</scope>
    <source>
        <tissue>Lens</tissue>
    </source>
</reference>
<sequence>RALGPLFPSRLFDQYLGEGLFDYDLLPFFSSTISPYYRHSLFRTVLESGISEVRSDRDKFTILLDVKHFSPEDLSVKIMDDFVEIHGKHNERQDDHGYISREFHRRYRLPSNVDQSAITCSLSADGMLTFSGPKVQSNMDTSYSERPIP</sequence>
<comment type="function">
    <text evidence="2">Contributes to the transparency and refractive index of the lens. May act as a chaperone, preventing aggregation of various proteins under a wide range of stress conditions.</text>
</comment>
<comment type="subunit">
    <text evidence="1 2">Heteropolymer composed of three CRYAA and one CRYAB subunits (By similarity). Inter-subunit bridging via zinc ions enhances stability, which is crucial as there is no protein turn over in the lens (By similarity). Zinc coordination is achieved at least by His-89, Glu-91 and His-96. His-83 and Glu-85 come from the same molecule within the oligomer, while His-90 residue is provided by another molecule (By similarity). Can also form homodimers and homotetramers (dimers of dimers) which serve as the building blocks of homooligomers (By similarity).</text>
</comment>
<comment type="subcellular location">
    <subcellularLocation>
        <location evidence="2">Cytoplasm</location>
    </subcellularLocation>
    <subcellularLocation>
        <location evidence="2">Nucleus</location>
    </subcellularLocation>
    <text evidence="2">Translocates to the nucleus during heat shock.</text>
</comment>
<comment type="similarity">
    <text evidence="3">Belongs to the small heat shock protein (HSP20) family.</text>
</comment>
<protein>
    <recommendedName>
        <fullName>Alpha-crystallin A chain</fullName>
    </recommendedName>
</protein>
<dbReference type="EMBL" id="U31938">
    <property type="protein sequence ID" value="AAB08829.1"/>
    <property type="molecule type" value="mRNA"/>
</dbReference>
<dbReference type="SMR" id="Q91517"/>
<dbReference type="GO" id="GO:0005737">
    <property type="term" value="C:cytoplasm"/>
    <property type="evidence" value="ECO:0007669"/>
    <property type="project" value="UniProtKB-SubCell"/>
</dbReference>
<dbReference type="GO" id="GO:0005634">
    <property type="term" value="C:nucleus"/>
    <property type="evidence" value="ECO:0007669"/>
    <property type="project" value="UniProtKB-SubCell"/>
</dbReference>
<dbReference type="GO" id="GO:0046872">
    <property type="term" value="F:metal ion binding"/>
    <property type="evidence" value="ECO:0007669"/>
    <property type="project" value="UniProtKB-KW"/>
</dbReference>
<dbReference type="GO" id="GO:0005212">
    <property type="term" value="F:structural constituent of eye lens"/>
    <property type="evidence" value="ECO:0007669"/>
    <property type="project" value="UniProtKB-KW"/>
</dbReference>
<dbReference type="GO" id="GO:0051082">
    <property type="term" value="F:unfolded protein binding"/>
    <property type="evidence" value="ECO:0007669"/>
    <property type="project" value="TreeGrafter"/>
</dbReference>
<dbReference type="GO" id="GO:0002088">
    <property type="term" value="P:lens development in camera-type eye"/>
    <property type="evidence" value="ECO:0007669"/>
    <property type="project" value="TreeGrafter"/>
</dbReference>
<dbReference type="GO" id="GO:0043066">
    <property type="term" value="P:negative regulation of apoptotic process"/>
    <property type="evidence" value="ECO:0007669"/>
    <property type="project" value="TreeGrafter"/>
</dbReference>
<dbReference type="GO" id="GO:0042026">
    <property type="term" value="P:protein refolding"/>
    <property type="evidence" value="ECO:0007669"/>
    <property type="project" value="TreeGrafter"/>
</dbReference>
<dbReference type="GO" id="GO:0009408">
    <property type="term" value="P:response to heat"/>
    <property type="evidence" value="ECO:0007669"/>
    <property type="project" value="TreeGrafter"/>
</dbReference>
<dbReference type="CDD" id="cd06497">
    <property type="entry name" value="ACD_alphaA-crystallin_HspB4"/>
    <property type="match status" value="1"/>
</dbReference>
<dbReference type="FunFam" id="2.60.40.790:FF:000008">
    <property type="entry name" value="Alpha-crystallin A chain"/>
    <property type="match status" value="1"/>
</dbReference>
<dbReference type="Gene3D" id="2.60.40.790">
    <property type="match status" value="1"/>
</dbReference>
<dbReference type="InterPro" id="IPR002068">
    <property type="entry name" value="A-crystallin/Hsp20_dom"/>
</dbReference>
<dbReference type="InterPro" id="IPR055269">
    <property type="entry name" value="Alpha-crystallin/HSP_16"/>
</dbReference>
<dbReference type="InterPro" id="IPR001436">
    <property type="entry name" value="Alpha-crystallin/sHSP_animal"/>
</dbReference>
<dbReference type="InterPro" id="IPR003090">
    <property type="entry name" value="Alpha-crystallin_N"/>
</dbReference>
<dbReference type="InterPro" id="IPR008978">
    <property type="entry name" value="HSP20-like_chaperone"/>
</dbReference>
<dbReference type="PANTHER" id="PTHR45640:SF14">
    <property type="entry name" value="ALPHA-CRYSTALLIN A CHAIN"/>
    <property type="match status" value="1"/>
</dbReference>
<dbReference type="PANTHER" id="PTHR45640">
    <property type="entry name" value="HEAT SHOCK PROTEIN HSP-12.2-RELATED"/>
    <property type="match status" value="1"/>
</dbReference>
<dbReference type="Pfam" id="PF00525">
    <property type="entry name" value="Crystallin"/>
    <property type="match status" value="1"/>
</dbReference>
<dbReference type="Pfam" id="PF00011">
    <property type="entry name" value="HSP20"/>
    <property type="match status" value="1"/>
</dbReference>
<dbReference type="PIRSF" id="PIRSF036514">
    <property type="entry name" value="Sm_HSP_B1"/>
    <property type="match status" value="1"/>
</dbReference>
<dbReference type="PRINTS" id="PR00299">
    <property type="entry name" value="ACRYSTALLIN"/>
</dbReference>
<dbReference type="SUPFAM" id="SSF49764">
    <property type="entry name" value="HSP20-like chaperones"/>
    <property type="match status" value="1"/>
</dbReference>
<dbReference type="PROSITE" id="PS01031">
    <property type="entry name" value="SHSP"/>
    <property type="match status" value="1"/>
</dbReference>